<organism>
    <name type="scientific">Streptomyces avermitilis (strain ATCC 31267 / DSM 46492 / JCM 5070 / NBRC 14893 / NCIMB 12804 / NRRL 8165 / MA-4680)</name>
    <dbReference type="NCBI Taxonomy" id="227882"/>
    <lineage>
        <taxon>Bacteria</taxon>
        <taxon>Bacillati</taxon>
        <taxon>Actinomycetota</taxon>
        <taxon>Actinomycetes</taxon>
        <taxon>Kitasatosporales</taxon>
        <taxon>Streptomycetaceae</taxon>
        <taxon>Streptomyces</taxon>
    </lineage>
</organism>
<accession>Q82JK9</accession>
<keyword id="KW-0067">ATP-binding</keyword>
<keyword id="KW-0436">Ligase</keyword>
<keyword id="KW-0547">Nucleotide-binding</keyword>
<keyword id="KW-0648">Protein biosynthesis</keyword>
<keyword id="KW-1185">Reference proteome</keyword>
<gene>
    <name evidence="1" type="primary">gatC</name>
    <name type="ordered locus">SAV_2746</name>
</gene>
<dbReference type="EC" id="6.3.5.-" evidence="1"/>
<dbReference type="EMBL" id="BA000030">
    <property type="protein sequence ID" value="BAC70457.1"/>
    <property type="molecule type" value="Genomic_DNA"/>
</dbReference>
<dbReference type="RefSeq" id="WP_010984178.1">
    <property type="nucleotide sequence ID" value="NZ_JZJK01000071.1"/>
</dbReference>
<dbReference type="SMR" id="Q82JK9"/>
<dbReference type="GeneID" id="95541806"/>
<dbReference type="KEGG" id="sma:SAVERM_2746"/>
<dbReference type="eggNOG" id="COG0721">
    <property type="taxonomic scope" value="Bacteria"/>
</dbReference>
<dbReference type="HOGENOM" id="CLU_105899_1_0_11"/>
<dbReference type="OrthoDB" id="5295223at2"/>
<dbReference type="Proteomes" id="UP000000428">
    <property type="component" value="Chromosome"/>
</dbReference>
<dbReference type="GO" id="GO:0050566">
    <property type="term" value="F:asparaginyl-tRNA synthase (glutamine-hydrolyzing) activity"/>
    <property type="evidence" value="ECO:0007669"/>
    <property type="project" value="RHEA"/>
</dbReference>
<dbReference type="GO" id="GO:0005524">
    <property type="term" value="F:ATP binding"/>
    <property type="evidence" value="ECO:0007669"/>
    <property type="project" value="UniProtKB-KW"/>
</dbReference>
<dbReference type="GO" id="GO:0050567">
    <property type="term" value="F:glutaminyl-tRNA synthase (glutamine-hydrolyzing) activity"/>
    <property type="evidence" value="ECO:0007669"/>
    <property type="project" value="UniProtKB-UniRule"/>
</dbReference>
<dbReference type="GO" id="GO:0070681">
    <property type="term" value="P:glutaminyl-tRNAGln biosynthesis via transamidation"/>
    <property type="evidence" value="ECO:0007669"/>
    <property type="project" value="TreeGrafter"/>
</dbReference>
<dbReference type="GO" id="GO:0006450">
    <property type="term" value="P:regulation of translational fidelity"/>
    <property type="evidence" value="ECO:0007669"/>
    <property type="project" value="InterPro"/>
</dbReference>
<dbReference type="GO" id="GO:0006412">
    <property type="term" value="P:translation"/>
    <property type="evidence" value="ECO:0007669"/>
    <property type="project" value="UniProtKB-UniRule"/>
</dbReference>
<dbReference type="Gene3D" id="1.10.20.60">
    <property type="entry name" value="Glu-tRNAGln amidotransferase C subunit, N-terminal domain"/>
    <property type="match status" value="1"/>
</dbReference>
<dbReference type="HAMAP" id="MF_00122">
    <property type="entry name" value="GatC"/>
    <property type="match status" value="1"/>
</dbReference>
<dbReference type="InterPro" id="IPR036113">
    <property type="entry name" value="Asp/Glu-ADT_sf_sub_c"/>
</dbReference>
<dbReference type="InterPro" id="IPR003837">
    <property type="entry name" value="GatC"/>
</dbReference>
<dbReference type="NCBIfam" id="TIGR00135">
    <property type="entry name" value="gatC"/>
    <property type="match status" value="1"/>
</dbReference>
<dbReference type="PANTHER" id="PTHR15004">
    <property type="entry name" value="GLUTAMYL-TRNA(GLN) AMIDOTRANSFERASE SUBUNIT C, MITOCHONDRIAL"/>
    <property type="match status" value="1"/>
</dbReference>
<dbReference type="PANTHER" id="PTHR15004:SF0">
    <property type="entry name" value="GLUTAMYL-TRNA(GLN) AMIDOTRANSFERASE SUBUNIT C, MITOCHONDRIAL"/>
    <property type="match status" value="1"/>
</dbReference>
<dbReference type="Pfam" id="PF02686">
    <property type="entry name" value="GatC"/>
    <property type="match status" value="1"/>
</dbReference>
<dbReference type="SUPFAM" id="SSF141000">
    <property type="entry name" value="Glu-tRNAGln amidotransferase C subunit"/>
    <property type="match status" value="1"/>
</dbReference>
<feature type="chain" id="PRO_0000105340" description="Aspartyl/glutamyl-tRNA(Asn/Gln) amidotransferase subunit C">
    <location>
        <begin position="1"/>
        <end position="98"/>
    </location>
</feature>
<feature type="region of interest" description="Disordered" evidence="2">
    <location>
        <begin position="70"/>
        <end position="98"/>
    </location>
</feature>
<proteinExistence type="inferred from homology"/>
<protein>
    <recommendedName>
        <fullName evidence="1">Aspartyl/glutamyl-tRNA(Asn/Gln) amidotransferase subunit C</fullName>
        <shortName evidence="1">Asp/Glu-ADT subunit C</shortName>
        <ecNumber evidence="1">6.3.5.-</ecNumber>
    </recommendedName>
</protein>
<comment type="function">
    <text evidence="1">Allows the formation of correctly charged Asn-tRNA(Asn) or Gln-tRNA(Gln) through the transamidation of misacylated Asp-tRNA(Asn) or Glu-tRNA(Gln) in organisms which lack either or both of asparaginyl-tRNA or glutaminyl-tRNA synthetases. The reaction takes place in the presence of glutamine and ATP through an activated phospho-Asp-tRNA(Asn) or phospho-Glu-tRNA(Gln).</text>
</comment>
<comment type="catalytic activity">
    <reaction evidence="1">
        <text>L-glutamyl-tRNA(Gln) + L-glutamine + ATP + H2O = L-glutaminyl-tRNA(Gln) + L-glutamate + ADP + phosphate + H(+)</text>
        <dbReference type="Rhea" id="RHEA:17521"/>
        <dbReference type="Rhea" id="RHEA-COMP:9681"/>
        <dbReference type="Rhea" id="RHEA-COMP:9684"/>
        <dbReference type="ChEBI" id="CHEBI:15377"/>
        <dbReference type="ChEBI" id="CHEBI:15378"/>
        <dbReference type="ChEBI" id="CHEBI:29985"/>
        <dbReference type="ChEBI" id="CHEBI:30616"/>
        <dbReference type="ChEBI" id="CHEBI:43474"/>
        <dbReference type="ChEBI" id="CHEBI:58359"/>
        <dbReference type="ChEBI" id="CHEBI:78520"/>
        <dbReference type="ChEBI" id="CHEBI:78521"/>
        <dbReference type="ChEBI" id="CHEBI:456216"/>
    </reaction>
</comment>
<comment type="catalytic activity">
    <reaction evidence="1">
        <text>L-aspartyl-tRNA(Asn) + L-glutamine + ATP + H2O = L-asparaginyl-tRNA(Asn) + L-glutamate + ADP + phosphate + 2 H(+)</text>
        <dbReference type="Rhea" id="RHEA:14513"/>
        <dbReference type="Rhea" id="RHEA-COMP:9674"/>
        <dbReference type="Rhea" id="RHEA-COMP:9677"/>
        <dbReference type="ChEBI" id="CHEBI:15377"/>
        <dbReference type="ChEBI" id="CHEBI:15378"/>
        <dbReference type="ChEBI" id="CHEBI:29985"/>
        <dbReference type="ChEBI" id="CHEBI:30616"/>
        <dbReference type="ChEBI" id="CHEBI:43474"/>
        <dbReference type="ChEBI" id="CHEBI:58359"/>
        <dbReference type="ChEBI" id="CHEBI:78515"/>
        <dbReference type="ChEBI" id="CHEBI:78516"/>
        <dbReference type="ChEBI" id="CHEBI:456216"/>
    </reaction>
</comment>
<comment type="subunit">
    <text evidence="1">Heterotrimer of A, B and C subunits.</text>
</comment>
<comment type="similarity">
    <text evidence="1">Belongs to the GatC family.</text>
</comment>
<reference key="1">
    <citation type="journal article" date="2001" name="Proc. Natl. Acad. Sci. U.S.A.">
        <title>Genome sequence of an industrial microorganism Streptomyces avermitilis: deducing the ability of producing secondary metabolites.</title>
        <authorList>
            <person name="Omura S."/>
            <person name="Ikeda H."/>
            <person name="Ishikawa J."/>
            <person name="Hanamoto A."/>
            <person name="Takahashi C."/>
            <person name="Shinose M."/>
            <person name="Takahashi Y."/>
            <person name="Horikawa H."/>
            <person name="Nakazawa H."/>
            <person name="Osonoe T."/>
            <person name="Kikuchi H."/>
            <person name="Shiba T."/>
            <person name="Sakaki Y."/>
            <person name="Hattori M."/>
        </authorList>
    </citation>
    <scope>NUCLEOTIDE SEQUENCE [LARGE SCALE GENOMIC DNA]</scope>
    <source>
        <strain>ATCC 31267 / DSM 46492 / JCM 5070 / NBRC 14893 / NCIMB 12804 / NRRL 8165 / MA-4680</strain>
    </source>
</reference>
<reference key="2">
    <citation type="journal article" date="2003" name="Nat. Biotechnol.">
        <title>Complete genome sequence and comparative analysis of the industrial microorganism Streptomyces avermitilis.</title>
        <authorList>
            <person name="Ikeda H."/>
            <person name="Ishikawa J."/>
            <person name="Hanamoto A."/>
            <person name="Shinose M."/>
            <person name="Kikuchi H."/>
            <person name="Shiba T."/>
            <person name="Sakaki Y."/>
            <person name="Hattori M."/>
            <person name="Omura S."/>
        </authorList>
    </citation>
    <scope>NUCLEOTIDE SEQUENCE [LARGE SCALE GENOMIC DNA]</scope>
    <source>
        <strain>ATCC 31267 / DSM 46492 / JCM 5070 / NBRC 14893 / NCIMB 12804 / NRRL 8165 / MA-4680</strain>
    </source>
</reference>
<name>GATC_STRAW</name>
<sequence>MPGITREEVAHLARLARLELKAEELDHFAGQLDDIIGAVARVSEVADQDVPPTSHPLPLTNVMRADEVRPSLTPEQALSGAPAQEQQRFKVPQILGED</sequence>
<evidence type="ECO:0000255" key="1">
    <source>
        <dbReference type="HAMAP-Rule" id="MF_00122"/>
    </source>
</evidence>
<evidence type="ECO:0000256" key="2">
    <source>
        <dbReference type="SAM" id="MobiDB-lite"/>
    </source>
</evidence>